<dbReference type="EMBL" id="CP000255">
    <property type="protein sequence ID" value="ABD21713.1"/>
    <property type="molecule type" value="Genomic_DNA"/>
</dbReference>
<dbReference type="RefSeq" id="WP_000076661.1">
    <property type="nucleotide sequence ID" value="NZ_CP027476.1"/>
</dbReference>
<dbReference type="SMR" id="Q2FDU9"/>
<dbReference type="KEGG" id="saa:SAUSA300_2495"/>
<dbReference type="HOGENOM" id="CLU_134973_10_4_9"/>
<dbReference type="OMA" id="NHCVKAV"/>
<dbReference type="Proteomes" id="UP000001939">
    <property type="component" value="Chromosome"/>
</dbReference>
<dbReference type="GO" id="GO:0005737">
    <property type="term" value="C:cytoplasm"/>
    <property type="evidence" value="ECO:0007669"/>
    <property type="project" value="UniProtKB-SubCell"/>
</dbReference>
<dbReference type="GO" id="GO:0005507">
    <property type="term" value="F:copper ion binding"/>
    <property type="evidence" value="ECO:0007669"/>
    <property type="project" value="InterPro"/>
</dbReference>
<dbReference type="CDD" id="cd00371">
    <property type="entry name" value="HMA"/>
    <property type="match status" value="1"/>
</dbReference>
<dbReference type="FunFam" id="3.30.70.100:FF:000005">
    <property type="entry name" value="Copper-exporting P-type ATPase A"/>
    <property type="match status" value="1"/>
</dbReference>
<dbReference type="Gene3D" id="3.30.70.100">
    <property type="match status" value="1"/>
</dbReference>
<dbReference type="InterPro" id="IPR049740">
    <property type="entry name" value="CopZ"/>
</dbReference>
<dbReference type="InterPro" id="IPR017969">
    <property type="entry name" value="Heavy-metal-associated_CS"/>
</dbReference>
<dbReference type="InterPro" id="IPR006122">
    <property type="entry name" value="HMA_Cu_ion-bd"/>
</dbReference>
<dbReference type="InterPro" id="IPR006121">
    <property type="entry name" value="HMA_dom"/>
</dbReference>
<dbReference type="InterPro" id="IPR036163">
    <property type="entry name" value="HMA_dom_sf"/>
</dbReference>
<dbReference type="InterPro" id="IPR001802">
    <property type="entry name" value="MerP/CopZ"/>
</dbReference>
<dbReference type="NCBIfam" id="NF033795">
    <property type="entry name" value="chaper_CopZ_Bs"/>
    <property type="match status" value="1"/>
</dbReference>
<dbReference type="NCBIfam" id="TIGR00003">
    <property type="entry name" value="copper ion binding protein"/>
    <property type="match status" value="1"/>
</dbReference>
<dbReference type="PANTHER" id="PTHR46594">
    <property type="entry name" value="P-TYPE CATION-TRANSPORTING ATPASE"/>
    <property type="match status" value="1"/>
</dbReference>
<dbReference type="PANTHER" id="PTHR46594:SF4">
    <property type="entry name" value="P-TYPE CATION-TRANSPORTING ATPASE"/>
    <property type="match status" value="1"/>
</dbReference>
<dbReference type="Pfam" id="PF00403">
    <property type="entry name" value="HMA"/>
    <property type="match status" value="1"/>
</dbReference>
<dbReference type="PRINTS" id="PR00946">
    <property type="entry name" value="HGSCAVENGER"/>
</dbReference>
<dbReference type="SUPFAM" id="SSF55008">
    <property type="entry name" value="HMA, heavy metal-associated domain"/>
    <property type="match status" value="1"/>
</dbReference>
<dbReference type="PROSITE" id="PS01047">
    <property type="entry name" value="HMA_1"/>
    <property type="match status" value="1"/>
</dbReference>
<dbReference type="PROSITE" id="PS50846">
    <property type="entry name" value="HMA_2"/>
    <property type="match status" value="1"/>
</dbReference>
<name>COPZ_STAA3</name>
<protein>
    <recommendedName>
        <fullName>Copper chaperone CopZ</fullName>
    </recommendedName>
</protein>
<comment type="function">
    <text evidence="1">Chaperone that serves for the intracellular sequestration and transport of Cu(+). Delivers Cu(+) to the copper-exporting P-type ATPase A (CopA) (By similarity).</text>
</comment>
<comment type="subcellular location">
    <subcellularLocation>
        <location evidence="1">Cytoplasm</location>
    </subcellularLocation>
</comment>
<gene>
    <name type="primary">copZ</name>
    <name type="ordered locus">SAUSA300_2495</name>
</gene>
<feature type="chain" id="PRO_0000351283" description="Copper chaperone CopZ">
    <location>
        <begin position="1"/>
        <end position="68"/>
    </location>
</feature>
<feature type="domain" description="HMA" evidence="2">
    <location>
        <begin position="2"/>
        <end position="68"/>
    </location>
</feature>
<feature type="binding site" evidence="2">
    <location>
        <position position="13"/>
    </location>
    <ligand>
        <name>Cu cation</name>
        <dbReference type="ChEBI" id="CHEBI:23378"/>
    </ligand>
</feature>
<feature type="binding site" evidence="2">
    <location>
        <position position="16"/>
    </location>
    <ligand>
        <name>Cu cation</name>
        <dbReference type="ChEBI" id="CHEBI:23378"/>
    </ligand>
</feature>
<accession>Q2FDU9</accession>
<keyword id="KW-0143">Chaperone</keyword>
<keyword id="KW-0186">Copper</keyword>
<keyword id="KW-0963">Cytoplasm</keyword>
<keyword id="KW-0479">Metal-binding</keyword>
<organism>
    <name type="scientific">Staphylococcus aureus (strain USA300)</name>
    <dbReference type="NCBI Taxonomy" id="367830"/>
    <lineage>
        <taxon>Bacteria</taxon>
        <taxon>Bacillati</taxon>
        <taxon>Bacillota</taxon>
        <taxon>Bacilli</taxon>
        <taxon>Bacillales</taxon>
        <taxon>Staphylococcaceae</taxon>
        <taxon>Staphylococcus</taxon>
    </lineage>
</organism>
<reference key="1">
    <citation type="journal article" date="2006" name="Lancet">
        <title>Complete genome sequence of USA300, an epidemic clone of community-acquired meticillin-resistant Staphylococcus aureus.</title>
        <authorList>
            <person name="Diep B.A."/>
            <person name="Gill S.R."/>
            <person name="Chang R.F."/>
            <person name="Phan T.H."/>
            <person name="Chen J.H."/>
            <person name="Davidson M.G."/>
            <person name="Lin F."/>
            <person name="Lin J."/>
            <person name="Carleton H.A."/>
            <person name="Mongodin E.F."/>
            <person name="Sensabaugh G.F."/>
            <person name="Perdreau-Remington F."/>
        </authorList>
    </citation>
    <scope>NUCLEOTIDE SEQUENCE [LARGE SCALE GENOMIC DNA]</scope>
    <source>
        <strain>USA300</strain>
    </source>
</reference>
<evidence type="ECO:0000250" key="1"/>
<evidence type="ECO:0000255" key="2">
    <source>
        <dbReference type="PROSITE-ProRule" id="PRU00280"/>
    </source>
</evidence>
<sequence length="68" mass="7237">MSQEILNVEGMSCGHCKSAVESALNNIDGVTSADVNLENGQVSVQYDDSKVAVSQMKDAIEDQGYDVV</sequence>
<proteinExistence type="inferred from homology"/>